<evidence type="ECO:0000255" key="1">
    <source>
        <dbReference type="HAMAP-Rule" id="MF_00191"/>
    </source>
</evidence>
<name>ISPH_SHEPA</name>
<gene>
    <name evidence="1" type="primary">ispH</name>
    <name type="ordered locus">Spea_1086</name>
</gene>
<keyword id="KW-0004">4Fe-4S</keyword>
<keyword id="KW-0408">Iron</keyword>
<keyword id="KW-0411">Iron-sulfur</keyword>
<keyword id="KW-0414">Isoprene biosynthesis</keyword>
<keyword id="KW-0479">Metal-binding</keyword>
<keyword id="KW-0560">Oxidoreductase</keyword>
<keyword id="KW-1185">Reference proteome</keyword>
<protein>
    <recommendedName>
        <fullName evidence="1">4-hydroxy-3-methylbut-2-enyl diphosphate reductase</fullName>
        <shortName evidence="1">HMBPP reductase</shortName>
        <ecNumber evidence="1">1.17.7.4</ecNumber>
    </recommendedName>
</protein>
<dbReference type="EC" id="1.17.7.4" evidence="1"/>
<dbReference type="EMBL" id="CP000851">
    <property type="protein sequence ID" value="ABV86413.1"/>
    <property type="molecule type" value="Genomic_DNA"/>
</dbReference>
<dbReference type="RefSeq" id="WP_012154344.1">
    <property type="nucleotide sequence ID" value="NC_009901.1"/>
</dbReference>
<dbReference type="SMR" id="A8H1H6"/>
<dbReference type="STRING" id="398579.Spea_1086"/>
<dbReference type="KEGG" id="spl:Spea_1086"/>
<dbReference type="eggNOG" id="COG0761">
    <property type="taxonomic scope" value="Bacteria"/>
</dbReference>
<dbReference type="HOGENOM" id="CLU_027486_1_0_6"/>
<dbReference type="OrthoDB" id="9804068at2"/>
<dbReference type="UniPathway" id="UPA00056">
    <property type="reaction ID" value="UER00097"/>
</dbReference>
<dbReference type="UniPathway" id="UPA00059">
    <property type="reaction ID" value="UER00105"/>
</dbReference>
<dbReference type="Proteomes" id="UP000002608">
    <property type="component" value="Chromosome"/>
</dbReference>
<dbReference type="GO" id="GO:0051539">
    <property type="term" value="F:4 iron, 4 sulfur cluster binding"/>
    <property type="evidence" value="ECO:0007669"/>
    <property type="project" value="UniProtKB-UniRule"/>
</dbReference>
<dbReference type="GO" id="GO:0051745">
    <property type="term" value="F:4-hydroxy-3-methylbut-2-enyl diphosphate reductase activity"/>
    <property type="evidence" value="ECO:0007669"/>
    <property type="project" value="UniProtKB-UniRule"/>
</dbReference>
<dbReference type="GO" id="GO:0046872">
    <property type="term" value="F:metal ion binding"/>
    <property type="evidence" value="ECO:0007669"/>
    <property type="project" value="UniProtKB-KW"/>
</dbReference>
<dbReference type="GO" id="GO:0050992">
    <property type="term" value="P:dimethylallyl diphosphate biosynthetic process"/>
    <property type="evidence" value="ECO:0007669"/>
    <property type="project" value="UniProtKB-UniRule"/>
</dbReference>
<dbReference type="GO" id="GO:0019288">
    <property type="term" value="P:isopentenyl diphosphate biosynthetic process, methylerythritol 4-phosphate pathway"/>
    <property type="evidence" value="ECO:0007669"/>
    <property type="project" value="UniProtKB-UniRule"/>
</dbReference>
<dbReference type="GO" id="GO:0016114">
    <property type="term" value="P:terpenoid biosynthetic process"/>
    <property type="evidence" value="ECO:0007669"/>
    <property type="project" value="UniProtKB-UniRule"/>
</dbReference>
<dbReference type="CDD" id="cd13944">
    <property type="entry name" value="lytB_ispH"/>
    <property type="match status" value="1"/>
</dbReference>
<dbReference type="Gene3D" id="3.40.50.11270">
    <property type="match status" value="1"/>
</dbReference>
<dbReference type="Gene3D" id="3.40.1010.20">
    <property type="entry name" value="4-hydroxy-3-methylbut-2-enyl diphosphate reductase, catalytic domain"/>
    <property type="match status" value="2"/>
</dbReference>
<dbReference type="HAMAP" id="MF_00191">
    <property type="entry name" value="IspH"/>
    <property type="match status" value="1"/>
</dbReference>
<dbReference type="InterPro" id="IPR003451">
    <property type="entry name" value="LytB/IspH"/>
</dbReference>
<dbReference type="NCBIfam" id="TIGR00216">
    <property type="entry name" value="ispH_lytB"/>
    <property type="match status" value="1"/>
</dbReference>
<dbReference type="NCBIfam" id="NF002188">
    <property type="entry name" value="PRK01045.1-2"/>
    <property type="match status" value="1"/>
</dbReference>
<dbReference type="NCBIfam" id="NF002190">
    <property type="entry name" value="PRK01045.1-4"/>
    <property type="match status" value="1"/>
</dbReference>
<dbReference type="PANTHER" id="PTHR30426">
    <property type="entry name" value="4-HYDROXY-3-METHYLBUT-2-ENYL DIPHOSPHATE REDUCTASE"/>
    <property type="match status" value="1"/>
</dbReference>
<dbReference type="PANTHER" id="PTHR30426:SF0">
    <property type="entry name" value="4-HYDROXY-3-METHYLBUT-2-ENYL DIPHOSPHATE REDUCTASE"/>
    <property type="match status" value="1"/>
</dbReference>
<dbReference type="Pfam" id="PF02401">
    <property type="entry name" value="LYTB"/>
    <property type="match status" value="1"/>
</dbReference>
<comment type="function">
    <text evidence="1">Catalyzes the conversion of 1-hydroxy-2-methyl-2-(E)-butenyl 4-diphosphate (HMBPP) into a mixture of isopentenyl diphosphate (IPP) and dimethylallyl diphosphate (DMAPP). Acts in the terminal step of the DOXP/MEP pathway for isoprenoid precursor biosynthesis.</text>
</comment>
<comment type="catalytic activity">
    <reaction evidence="1">
        <text>isopentenyl diphosphate + 2 oxidized [2Fe-2S]-[ferredoxin] + H2O = (2E)-4-hydroxy-3-methylbut-2-enyl diphosphate + 2 reduced [2Fe-2S]-[ferredoxin] + 2 H(+)</text>
        <dbReference type="Rhea" id="RHEA:24488"/>
        <dbReference type="Rhea" id="RHEA-COMP:10000"/>
        <dbReference type="Rhea" id="RHEA-COMP:10001"/>
        <dbReference type="ChEBI" id="CHEBI:15377"/>
        <dbReference type="ChEBI" id="CHEBI:15378"/>
        <dbReference type="ChEBI" id="CHEBI:33737"/>
        <dbReference type="ChEBI" id="CHEBI:33738"/>
        <dbReference type="ChEBI" id="CHEBI:128753"/>
        <dbReference type="ChEBI" id="CHEBI:128769"/>
        <dbReference type="EC" id="1.17.7.4"/>
    </reaction>
</comment>
<comment type="catalytic activity">
    <reaction evidence="1">
        <text>dimethylallyl diphosphate + 2 oxidized [2Fe-2S]-[ferredoxin] + H2O = (2E)-4-hydroxy-3-methylbut-2-enyl diphosphate + 2 reduced [2Fe-2S]-[ferredoxin] + 2 H(+)</text>
        <dbReference type="Rhea" id="RHEA:24825"/>
        <dbReference type="Rhea" id="RHEA-COMP:10000"/>
        <dbReference type="Rhea" id="RHEA-COMP:10001"/>
        <dbReference type="ChEBI" id="CHEBI:15377"/>
        <dbReference type="ChEBI" id="CHEBI:15378"/>
        <dbReference type="ChEBI" id="CHEBI:33737"/>
        <dbReference type="ChEBI" id="CHEBI:33738"/>
        <dbReference type="ChEBI" id="CHEBI:57623"/>
        <dbReference type="ChEBI" id="CHEBI:128753"/>
        <dbReference type="EC" id="1.17.7.4"/>
    </reaction>
</comment>
<comment type="cofactor">
    <cofactor evidence="1">
        <name>[4Fe-4S] cluster</name>
        <dbReference type="ChEBI" id="CHEBI:49883"/>
    </cofactor>
    <text evidence="1">Binds 1 [4Fe-4S] cluster per subunit.</text>
</comment>
<comment type="pathway">
    <text evidence="1">Isoprenoid biosynthesis; dimethylallyl diphosphate biosynthesis; dimethylallyl diphosphate from (2E)-4-hydroxy-3-methylbutenyl diphosphate: step 1/1.</text>
</comment>
<comment type="pathway">
    <text evidence="1">Isoprenoid biosynthesis; isopentenyl diphosphate biosynthesis via DXP pathway; isopentenyl diphosphate from 1-deoxy-D-xylulose 5-phosphate: step 6/6.</text>
</comment>
<comment type="similarity">
    <text evidence="1">Belongs to the IspH family.</text>
</comment>
<accession>A8H1H6</accession>
<proteinExistence type="inferred from homology"/>
<sequence length="309" mass="33643">MNILLANPRGFCAGVDRAISIVERALELFSPPIYVRHEVVHNRYVVQNLKERGAVFVEELDQVPDDSIVIFSAHGVSQAVRAEAKRRGLKVFDATCPLVTKVHLQVARASRKGIECILIGHAGHPEVEGTMGQYDNSAGGVHLVESPEDVAKLVVKDPDNLCFVTQTTLSMDDTADVISSLQKKYPSIEGPRKDDICYATQNRQDAVRNVAEEVELFIVVGSKNSSNSNRLRELAQKKGTQAFLVDNADDVDATWFNGVERVAVTAGASAPEVLVKQVVDAIAKMAPSVVTEVEGQLEDTVFAVPAELR</sequence>
<organism>
    <name type="scientific">Shewanella pealeana (strain ATCC 700345 / ANG-SQ1)</name>
    <dbReference type="NCBI Taxonomy" id="398579"/>
    <lineage>
        <taxon>Bacteria</taxon>
        <taxon>Pseudomonadati</taxon>
        <taxon>Pseudomonadota</taxon>
        <taxon>Gammaproteobacteria</taxon>
        <taxon>Alteromonadales</taxon>
        <taxon>Shewanellaceae</taxon>
        <taxon>Shewanella</taxon>
    </lineage>
</organism>
<reference key="1">
    <citation type="submission" date="2007-10" db="EMBL/GenBank/DDBJ databases">
        <title>Complete sequence of Shewanella pealeana ATCC 700345.</title>
        <authorList>
            <consortium name="US DOE Joint Genome Institute"/>
            <person name="Copeland A."/>
            <person name="Lucas S."/>
            <person name="Lapidus A."/>
            <person name="Barry K."/>
            <person name="Glavina del Rio T."/>
            <person name="Dalin E."/>
            <person name="Tice H."/>
            <person name="Pitluck S."/>
            <person name="Chertkov O."/>
            <person name="Brettin T."/>
            <person name="Bruce D."/>
            <person name="Detter J.C."/>
            <person name="Han C."/>
            <person name="Schmutz J."/>
            <person name="Larimer F."/>
            <person name="Land M."/>
            <person name="Hauser L."/>
            <person name="Kyrpides N."/>
            <person name="Kim E."/>
            <person name="Zhao J.-S.Z."/>
            <person name="Manno D."/>
            <person name="Hawari J."/>
            <person name="Richardson P."/>
        </authorList>
    </citation>
    <scope>NUCLEOTIDE SEQUENCE [LARGE SCALE GENOMIC DNA]</scope>
    <source>
        <strain>ATCC 700345 / ANG-SQ1</strain>
    </source>
</reference>
<feature type="chain" id="PRO_1000077529" description="4-hydroxy-3-methylbut-2-enyl diphosphate reductase">
    <location>
        <begin position="1"/>
        <end position="309"/>
    </location>
</feature>
<feature type="active site" description="Proton donor" evidence="1">
    <location>
        <position position="126"/>
    </location>
</feature>
<feature type="binding site" evidence="1">
    <location>
        <position position="12"/>
    </location>
    <ligand>
        <name>[4Fe-4S] cluster</name>
        <dbReference type="ChEBI" id="CHEBI:49883"/>
    </ligand>
</feature>
<feature type="binding site" evidence="1">
    <location>
        <position position="41"/>
    </location>
    <ligand>
        <name>(2E)-4-hydroxy-3-methylbut-2-enyl diphosphate</name>
        <dbReference type="ChEBI" id="CHEBI:128753"/>
    </ligand>
</feature>
<feature type="binding site" evidence="1">
    <location>
        <position position="41"/>
    </location>
    <ligand>
        <name>dimethylallyl diphosphate</name>
        <dbReference type="ChEBI" id="CHEBI:57623"/>
    </ligand>
</feature>
<feature type="binding site" evidence="1">
    <location>
        <position position="41"/>
    </location>
    <ligand>
        <name>isopentenyl diphosphate</name>
        <dbReference type="ChEBI" id="CHEBI:128769"/>
    </ligand>
</feature>
<feature type="binding site" evidence="1">
    <location>
        <position position="74"/>
    </location>
    <ligand>
        <name>(2E)-4-hydroxy-3-methylbut-2-enyl diphosphate</name>
        <dbReference type="ChEBI" id="CHEBI:128753"/>
    </ligand>
</feature>
<feature type="binding site" evidence="1">
    <location>
        <position position="74"/>
    </location>
    <ligand>
        <name>dimethylallyl diphosphate</name>
        <dbReference type="ChEBI" id="CHEBI:57623"/>
    </ligand>
</feature>
<feature type="binding site" evidence="1">
    <location>
        <position position="74"/>
    </location>
    <ligand>
        <name>isopentenyl diphosphate</name>
        <dbReference type="ChEBI" id="CHEBI:128769"/>
    </ligand>
</feature>
<feature type="binding site" evidence="1">
    <location>
        <position position="96"/>
    </location>
    <ligand>
        <name>[4Fe-4S] cluster</name>
        <dbReference type="ChEBI" id="CHEBI:49883"/>
    </ligand>
</feature>
<feature type="binding site" evidence="1">
    <location>
        <position position="124"/>
    </location>
    <ligand>
        <name>(2E)-4-hydroxy-3-methylbut-2-enyl diphosphate</name>
        <dbReference type="ChEBI" id="CHEBI:128753"/>
    </ligand>
</feature>
<feature type="binding site" evidence="1">
    <location>
        <position position="124"/>
    </location>
    <ligand>
        <name>dimethylallyl diphosphate</name>
        <dbReference type="ChEBI" id="CHEBI:57623"/>
    </ligand>
</feature>
<feature type="binding site" evidence="1">
    <location>
        <position position="124"/>
    </location>
    <ligand>
        <name>isopentenyl diphosphate</name>
        <dbReference type="ChEBI" id="CHEBI:128769"/>
    </ligand>
</feature>
<feature type="binding site" evidence="1">
    <location>
        <position position="167"/>
    </location>
    <ligand>
        <name>(2E)-4-hydroxy-3-methylbut-2-enyl diphosphate</name>
        <dbReference type="ChEBI" id="CHEBI:128753"/>
    </ligand>
</feature>
<feature type="binding site" evidence="1">
    <location>
        <position position="197"/>
    </location>
    <ligand>
        <name>[4Fe-4S] cluster</name>
        <dbReference type="ChEBI" id="CHEBI:49883"/>
    </ligand>
</feature>
<feature type="binding site" evidence="1">
    <location>
        <position position="225"/>
    </location>
    <ligand>
        <name>(2E)-4-hydroxy-3-methylbut-2-enyl diphosphate</name>
        <dbReference type="ChEBI" id="CHEBI:128753"/>
    </ligand>
</feature>
<feature type="binding site" evidence="1">
    <location>
        <position position="225"/>
    </location>
    <ligand>
        <name>dimethylallyl diphosphate</name>
        <dbReference type="ChEBI" id="CHEBI:57623"/>
    </ligand>
</feature>
<feature type="binding site" evidence="1">
    <location>
        <position position="225"/>
    </location>
    <ligand>
        <name>isopentenyl diphosphate</name>
        <dbReference type="ChEBI" id="CHEBI:128769"/>
    </ligand>
</feature>
<feature type="binding site" evidence="1">
    <location>
        <position position="226"/>
    </location>
    <ligand>
        <name>(2E)-4-hydroxy-3-methylbut-2-enyl diphosphate</name>
        <dbReference type="ChEBI" id="CHEBI:128753"/>
    </ligand>
</feature>
<feature type="binding site" evidence="1">
    <location>
        <position position="226"/>
    </location>
    <ligand>
        <name>dimethylallyl diphosphate</name>
        <dbReference type="ChEBI" id="CHEBI:57623"/>
    </ligand>
</feature>
<feature type="binding site" evidence="1">
    <location>
        <position position="226"/>
    </location>
    <ligand>
        <name>isopentenyl diphosphate</name>
        <dbReference type="ChEBI" id="CHEBI:128769"/>
    </ligand>
</feature>
<feature type="binding site" evidence="1">
    <location>
        <position position="227"/>
    </location>
    <ligand>
        <name>(2E)-4-hydroxy-3-methylbut-2-enyl diphosphate</name>
        <dbReference type="ChEBI" id="CHEBI:128753"/>
    </ligand>
</feature>
<feature type="binding site" evidence="1">
    <location>
        <position position="227"/>
    </location>
    <ligand>
        <name>dimethylallyl diphosphate</name>
        <dbReference type="ChEBI" id="CHEBI:57623"/>
    </ligand>
</feature>
<feature type="binding site" evidence="1">
    <location>
        <position position="227"/>
    </location>
    <ligand>
        <name>isopentenyl diphosphate</name>
        <dbReference type="ChEBI" id="CHEBI:128769"/>
    </ligand>
</feature>
<feature type="binding site" evidence="1">
    <location>
        <position position="269"/>
    </location>
    <ligand>
        <name>(2E)-4-hydroxy-3-methylbut-2-enyl diphosphate</name>
        <dbReference type="ChEBI" id="CHEBI:128753"/>
    </ligand>
</feature>
<feature type="binding site" evidence="1">
    <location>
        <position position="269"/>
    </location>
    <ligand>
        <name>dimethylallyl diphosphate</name>
        <dbReference type="ChEBI" id="CHEBI:57623"/>
    </ligand>
</feature>
<feature type="binding site" evidence="1">
    <location>
        <position position="269"/>
    </location>
    <ligand>
        <name>isopentenyl diphosphate</name>
        <dbReference type="ChEBI" id="CHEBI:128769"/>
    </ligand>
</feature>